<feature type="chain" id="PRO_1000143807" description="Large ribosomal subunit protein bL21">
    <location>
        <begin position="1"/>
        <end position="104"/>
    </location>
</feature>
<gene>
    <name evidence="1" type="primary">rplU</name>
    <name type="ordered locus">HPG27_275</name>
</gene>
<dbReference type="EMBL" id="CP001173">
    <property type="protein sequence ID" value="ACI27042.1"/>
    <property type="molecule type" value="Genomic_DNA"/>
</dbReference>
<dbReference type="RefSeq" id="WP_000119321.1">
    <property type="nucleotide sequence ID" value="NC_011333.1"/>
</dbReference>
<dbReference type="SMR" id="B5ZA62"/>
<dbReference type="KEGG" id="hpg:HPG27_275"/>
<dbReference type="HOGENOM" id="CLU_061463_3_1_7"/>
<dbReference type="Proteomes" id="UP000001735">
    <property type="component" value="Chromosome"/>
</dbReference>
<dbReference type="GO" id="GO:0005737">
    <property type="term" value="C:cytoplasm"/>
    <property type="evidence" value="ECO:0007669"/>
    <property type="project" value="UniProtKB-ARBA"/>
</dbReference>
<dbReference type="GO" id="GO:1990904">
    <property type="term" value="C:ribonucleoprotein complex"/>
    <property type="evidence" value="ECO:0007669"/>
    <property type="project" value="UniProtKB-KW"/>
</dbReference>
<dbReference type="GO" id="GO:0005840">
    <property type="term" value="C:ribosome"/>
    <property type="evidence" value="ECO:0007669"/>
    <property type="project" value="UniProtKB-KW"/>
</dbReference>
<dbReference type="GO" id="GO:0019843">
    <property type="term" value="F:rRNA binding"/>
    <property type="evidence" value="ECO:0007669"/>
    <property type="project" value="UniProtKB-UniRule"/>
</dbReference>
<dbReference type="GO" id="GO:0003735">
    <property type="term" value="F:structural constituent of ribosome"/>
    <property type="evidence" value="ECO:0007669"/>
    <property type="project" value="InterPro"/>
</dbReference>
<dbReference type="GO" id="GO:0006412">
    <property type="term" value="P:translation"/>
    <property type="evidence" value="ECO:0007669"/>
    <property type="project" value="UniProtKB-UniRule"/>
</dbReference>
<dbReference type="HAMAP" id="MF_01363">
    <property type="entry name" value="Ribosomal_bL21"/>
    <property type="match status" value="1"/>
</dbReference>
<dbReference type="InterPro" id="IPR028909">
    <property type="entry name" value="bL21-like"/>
</dbReference>
<dbReference type="InterPro" id="IPR036164">
    <property type="entry name" value="bL21-like_sf"/>
</dbReference>
<dbReference type="InterPro" id="IPR001787">
    <property type="entry name" value="Ribosomal_bL21"/>
</dbReference>
<dbReference type="InterPro" id="IPR018258">
    <property type="entry name" value="Ribosomal_bL21_CS"/>
</dbReference>
<dbReference type="NCBIfam" id="TIGR00061">
    <property type="entry name" value="L21"/>
    <property type="match status" value="1"/>
</dbReference>
<dbReference type="PANTHER" id="PTHR21349">
    <property type="entry name" value="50S RIBOSOMAL PROTEIN L21"/>
    <property type="match status" value="1"/>
</dbReference>
<dbReference type="PANTHER" id="PTHR21349:SF0">
    <property type="entry name" value="LARGE RIBOSOMAL SUBUNIT PROTEIN BL21M"/>
    <property type="match status" value="1"/>
</dbReference>
<dbReference type="Pfam" id="PF00829">
    <property type="entry name" value="Ribosomal_L21p"/>
    <property type="match status" value="1"/>
</dbReference>
<dbReference type="SUPFAM" id="SSF141091">
    <property type="entry name" value="L21p-like"/>
    <property type="match status" value="1"/>
</dbReference>
<dbReference type="PROSITE" id="PS01169">
    <property type="entry name" value="RIBOSOMAL_L21"/>
    <property type="match status" value="1"/>
</dbReference>
<organism>
    <name type="scientific">Helicobacter pylori (strain G27)</name>
    <dbReference type="NCBI Taxonomy" id="563041"/>
    <lineage>
        <taxon>Bacteria</taxon>
        <taxon>Pseudomonadati</taxon>
        <taxon>Campylobacterota</taxon>
        <taxon>Epsilonproteobacteria</taxon>
        <taxon>Campylobacterales</taxon>
        <taxon>Helicobacteraceae</taxon>
        <taxon>Helicobacter</taxon>
    </lineage>
</organism>
<reference key="1">
    <citation type="journal article" date="2009" name="J. Bacteriol.">
        <title>The complete genome sequence of Helicobacter pylori strain G27.</title>
        <authorList>
            <person name="Baltrus D.A."/>
            <person name="Amieva M.R."/>
            <person name="Covacci A."/>
            <person name="Lowe T.M."/>
            <person name="Merrell D.S."/>
            <person name="Ottemann K.M."/>
            <person name="Stein M."/>
            <person name="Salama N.R."/>
            <person name="Guillemin K."/>
        </authorList>
    </citation>
    <scope>NUCLEOTIDE SEQUENCE [LARGE SCALE GENOMIC DNA]</scope>
    <source>
        <strain>G27</strain>
    </source>
</reference>
<evidence type="ECO:0000255" key="1">
    <source>
        <dbReference type="HAMAP-Rule" id="MF_01363"/>
    </source>
</evidence>
<evidence type="ECO:0000305" key="2"/>
<accession>B5ZA62</accession>
<protein>
    <recommendedName>
        <fullName evidence="1">Large ribosomal subunit protein bL21</fullName>
    </recommendedName>
    <alternativeName>
        <fullName evidence="2">50S ribosomal protein L21</fullName>
    </alternativeName>
</protein>
<comment type="function">
    <text evidence="1">This protein binds to 23S rRNA in the presence of protein L20.</text>
</comment>
<comment type="subunit">
    <text evidence="1">Part of the 50S ribosomal subunit. Contacts protein L20.</text>
</comment>
<comment type="similarity">
    <text evidence="1">Belongs to the bacterial ribosomal protein bL21 family.</text>
</comment>
<keyword id="KW-1185">Reference proteome</keyword>
<keyword id="KW-0687">Ribonucleoprotein</keyword>
<keyword id="KW-0689">Ribosomal protein</keyword>
<keyword id="KW-0694">RNA-binding</keyword>
<keyword id="KW-0699">rRNA-binding</keyword>
<sequence>MSYAIFKHGGKQYKVVEGDIVLLDKMDKEPKALVELVEVLAVSKEGKLSFGKPFVNGAKIEAEVINEGRSKKVITFKKRRRKDSKTKRGFRRDFTRVRITKIVA</sequence>
<proteinExistence type="inferred from homology"/>
<name>RL21_HELPG</name>